<comment type="sequence caution" evidence="1">
    <conflict type="erroneous gene model prediction">
        <sequence resource="EMBL-CDS" id="AAG51566"/>
    </conflict>
</comment>
<gene>
    <name type="ordered locus">At1g55270</name>
    <name type="ORF">F7A10.5</name>
</gene>
<name>FBK22_ARATH</name>
<feature type="chain" id="PRO_0000283182" description="F-box/kelch-repeat protein At1g55270">
    <location>
        <begin position="1"/>
        <end position="434"/>
    </location>
</feature>
<feature type="domain" description="F-box">
    <location>
        <begin position="76"/>
        <end position="122"/>
    </location>
</feature>
<feature type="repeat" description="Kelch 1">
    <location>
        <begin position="129"/>
        <end position="178"/>
    </location>
</feature>
<feature type="repeat" description="Kelch 2">
    <location>
        <begin position="180"/>
        <end position="227"/>
    </location>
</feature>
<feature type="repeat" description="Kelch 3">
    <location>
        <begin position="229"/>
        <end position="276"/>
    </location>
</feature>
<feature type="repeat" description="Kelch 4">
    <location>
        <begin position="278"/>
        <end position="321"/>
    </location>
</feature>
<feature type="repeat" description="Kelch 5">
    <location>
        <begin position="325"/>
        <end position="371"/>
    </location>
</feature>
<protein>
    <recommendedName>
        <fullName>F-box/kelch-repeat protein At1g55270</fullName>
    </recommendedName>
</protein>
<accession>Q93W93</accession>
<accession>Q9C897</accession>
<proteinExistence type="evidence at transcript level"/>
<evidence type="ECO:0000305" key="1"/>
<sequence>MDLSSQRQSPNGSRGFRLQAPLVDSVSCYCRVDSGLKTVVEARKFVPGSKLCIQPDINPNAHRRKNSKRERTRIQPPLLPGLPDDLAVACLIRVPRAEHRKLRLVCKRWYRLASGNFFYSQRKLLGMSEEWVYVFKRDRDGKISWNTFDPISQLWQPLPPVPREYSEAVGFGCAVLSGCHLYLFGGKDPLRGSMRRVIFYNARTNKWHRAPDMLRKRHFFGCCVINNCLYVAGGECEGIQRTLRSAEVYDPNKNRWSFIADMSTAMVPLIGVVYDKKWFLKGLGSHQLVMSEAYDPEVNSWSPVSDGMVAGWRNPCTSLNGRLYGLDCRDGCKLRVFDESTDSWNKFMDSKAHLGNSKSLEAAALVPLHNKLCIIRNNMSMSLVDVSNPDKNNPRLWENIAVKGQSKSILSNIWSSIAGRALKSHIVHCQVLQA</sequence>
<keyword id="KW-0880">Kelch repeat</keyword>
<keyword id="KW-1185">Reference proteome</keyword>
<keyword id="KW-0677">Repeat</keyword>
<organism>
    <name type="scientific">Arabidopsis thaliana</name>
    <name type="common">Mouse-ear cress</name>
    <dbReference type="NCBI Taxonomy" id="3702"/>
    <lineage>
        <taxon>Eukaryota</taxon>
        <taxon>Viridiplantae</taxon>
        <taxon>Streptophyta</taxon>
        <taxon>Embryophyta</taxon>
        <taxon>Tracheophyta</taxon>
        <taxon>Spermatophyta</taxon>
        <taxon>Magnoliopsida</taxon>
        <taxon>eudicotyledons</taxon>
        <taxon>Gunneridae</taxon>
        <taxon>Pentapetalae</taxon>
        <taxon>rosids</taxon>
        <taxon>malvids</taxon>
        <taxon>Brassicales</taxon>
        <taxon>Brassicaceae</taxon>
        <taxon>Camelineae</taxon>
        <taxon>Arabidopsis</taxon>
    </lineage>
</organism>
<reference key="1">
    <citation type="journal article" date="2000" name="Nature">
        <title>Sequence and analysis of chromosome 1 of the plant Arabidopsis thaliana.</title>
        <authorList>
            <person name="Theologis A."/>
            <person name="Ecker J.R."/>
            <person name="Palm C.J."/>
            <person name="Federspiel N.A."/>
            <person name="Kaul S."/>
            <person name="White O."/>
            <person name="Alonso J."/>
            <person name="Altafi H."/>
            <person name="Araujo R."/>
            <person name="Bowman C.L."/>
            <person name="Brooks S.Y."/>
            <person name="Buehler E."/>
            <person name="Chan A."/>
            <person name="Chao Q."/>
            <person name="Chen H."/>
            <person name="Cheuk R.F."/>
            <person name="Chin C.W."/>
            <person name="Chung M.K."/>
            <person name="Conn L."/>
            <person name="Conway A.B."/>
            <person name="Conway A.R."/>
            <person name="Creasy T.H."/>
            <person name="Dewar K."/>
            <person name="Dunn P."/>
            <person name="Etgu P."/>
            <person name="Feldblyum T.V."/>
            <person name="Feng J.-D."/>
            <person name="Fong B."/>
            <person name="Fujii C.Y."/>
            <person name="Gill J.E."/>
            <person name="Goldsmith A.D."/>
            <person name="Haas B."/>
            <person name="Hansen N.F."/>
            <person name="Hughes B."/>
            <person name="Huizar L."/>
            <person name="Hunter J.L."/>
            <person name="Jenkins J."/>
            <person name="Johnson-Hopson C."/>
            <person name="Khan S."/>
            <person name="Khaykin E."/>
            <person name="Kim C.J."/>
            <person name="Koo H.L."/>
            <person name="Kremenetskaia I."/>
            <person name="Kurtz D.B."/>
            <person name="Kwan A."/>
            <person name="Lam B."/>
            <person name="Langin-Hooper S."/>
            <person name="Lee A."/>
            <person name="Lee J.M."/>
            <person name="Lenz C.A."/>
            <person name="Li J.H."/>
            <person name="Li Y.-P."/>
            <person name="Lin X."/>
            <person name="Liu S.X."/>
            <person name="Liu Z.A."/>
            <person name="Luros J.S."/>
            <person name="Maiti R."/>
            <person name="Marziali A."/>
            <person name="Militscher J."/>
            <person name="Miranda M."/>
            <person name="Nguyen M."/>
            <person name="Nierman W.C."/>
            <person name="Osborne B.I."/>
            <person name="Pai G."/>
            <person name="Peterson J."/>
            <person name="Pham P.K."/>
            <person name="Rizzo M."/>
            <person name="Rooney T."/>
            <person name="Rowley D."/>
            <person name="Sakano H."/>
            <person name="Salzberg S.L."/>
            <person name="Schwartz J.R."/>
            <person name="Shinn P."/>
            <person name="Southwick A.M."/>
            <person name="Sun H."/>
            <person name="Tallon L.J."/>
            <person name="Tambunga G."/>
            <person name="Toriumi M.J."/>
            <person name="Town C.D."/>
            <person name="Utterback T."/>
            <person name="Van Aken S."/>
            <person name="Vaysberg M."/>
            <person name="Vysotskaia V.S."/>
            <person name="Walker M."/>
            <person name="Wu D."/>
            <person name="Yu G."/>
            <person name="Fraser C.M."/>
            <person name="Venter J.C."/>
            <person name="Davis R.W."/>
        </authorList>
    </citation>
    <scope>NUCLEOTIDE SEQUENCE [LARGE SCALE GENOMIC DNA]</scope>
    <source>
        <strain>cv. Columbia</strain>
    </source>
</reference>
<reference key="2">
    <citation type="journal article" date="2017" name="Plant J.">
        <title>Araport11: a complete reannotation of the Arabidopsis thaliana reference genome.</title>
        <authorList>
            <person name="Cheng C.Y."/>
            <person name="Krishnakumar V."/>
            <person name="Chan A.P."/>
            <person name="Thibaud-Nissen F."/>
            <person name="Schobel S."/>
            <person name="Town C.D."/>
        </authorList>
    </citation>
    <scope>GENOME REANNOTATION</scope>
    <source>
        <strain>cv. Columbia</strain>
    </source>
</reference>
<reference key="3">
    <citation type="journal article" date="2003" name="Science">
        <title>Empirical analysis of transcriptional activity in the Arabidopsis genome.</title>
        <authorList>
            <person name="Yamada K."/>
            <person name="Lim J."/>
            <person name="Dale J.M."/>
            <person name="Chen H."/>
            <person name="Shinn P."/>
            <person name="Palm C.J."/>
            <person name="Southwick A.M."/>
            <person name="Wu H.C."/>
            <person name="Kim C.J."/>
            <person name="Nguyen M."/>
            <person name="Pham P.K."/>
            <person name="Cheuk R.F."/>
            <person name="Karlin-Newmann G."/>
            <person name="Liu S.X."/>
            <person name="Lam B."/>
            <person name="Sakano H."/>
            <person name="Wu T."/>
            <person name="Yu G."/>
            <person name="Miranda M."/>
            <person name="Quach H.L."/>
            <person name="Tripp M."/>
            <person name="Chang C.H."/>
            <person name="Lee J.M."/>
            <person name="Toriumi M.J."/>
            <person name="Chan M.M."/>
            <person name="Tang C.C."/>
            <person name="Onodera C.S."/>
            <person name="Deng J.M."/>
            <person name="Akiyama K."/>
            <person name="Ansari Y."/>
            <person name="Arakawa T."/>
            <person name="Banh J."/>
            <person name="Banno F."/>
            <person name="Bowser L."/>
            <person name="Brooks S.Y."/>
            <person name="Carninci P."/>
            <person name="Chao Q."/>
            <person name="Choy N."/>
            <person name="Enju A."/>
            <person name="Goldsmith A.D."/>
            <person name="Gurjal M."/>
            <person name="Hansen N.F."/>
            <person name="Hayashizaki Y."/>
            <person name="Johnson-Hopson C."/>
            <person name="Hsuan V.W."/>
            <person name="Iida K."/>
            <person name="Karnes M."/>
            <person name="Khan S."/>
            <person name="Koesema E."/>
            <person name="Ishida J."/>
            <person name="Jiang P.X."/>
            <person name="Jones T."/>
            <person name="Kawai J."/>
            <person name="Kamiya A."/>
            <person name="Meyers C."/>
            <person name="Nakajima M."/>
            <person name="Narusaka M."/>
            <person name="Seki M."/>
            <person name="Sakurai T."/>
            <person name="Satou M."/>
            <person name="Tamse R."/>
            <person name="Vaysberg M."/>
            <person name="Wallender E.K."/>
            <person name="Wong C."/>
            <person name="Yamamura Y."/>
            <person name="Yuan S."/>
            <person name="Shinozaki K."/>
            <person name="Davis R.W."/>
            <person name="Theologis A."/>
            <person name="Ecker J.R."/>
        </authorList>
    </citation>
    <scope>NUCLEOTIDE SEQUENCE [LARGE SCALE MRNA]</scope>
    <source>
        <strain>cv. Columbia</strain>
    </source>
</reference>
<dbReference type="EMBL" id="AC027034">
    <property type="protein sequence ID" value="AAG51566.1"/>
    <property type="status" value="ALT_SEQ"/>
    <property type="molecule type" value="Genomic_DNA"/>
</dbReference>
<dbReference type="EMBL" id="CP002684">
    <property type="protein sequence ID" value="AEE33217.1"/>
    <property type="molecule type" value="Genomic_DNA"/>
</dbReference>
<dbReference type="EMBL" id="AF370138">
    <property type="protein sequence ID" value="AAK43953.1"/>
    <property type="molecule type" value="mRNA"/>
</dbReference>
<dbReference type="EMBL" id="AY051069">
    <property type="protein sequence ID" value="AAK93746.1"/>
    <property type="molecule type" value="mRNA"/>
</dbReference>
<dbReference type="PIR" id="F96594">
    <property type="entry name" value="F96594"/>
</dbReference>
<dbReference type="RefSeq" id="NP_564684.1">
    <property type="nucleotide sequence ID" value="NM_104402.4"/>
</dbReference>
<dbReference type="SMR" id="Q93W93"/>
<dbReference type="BioGRID" id="27197">
    <property type="interactions" value="1"/>
</dbReference>
<dbReference type="FunCoup" id="Q93W93">
    <property type="interactions" value="1942"/>
</dbReference>
<dbReference type="IntAct" id="Q93W93">
    <property type="interactions" value="1"/>
</dbReference>
<dbReference type="STRING" id="3702.Q93W93"/>
<dbReference type="PaxDb" id="3702-AT1G55270.1"/>
<dbReference type="ProteomicsDB" id="230675"/>
<dbReference type="EnsemblPlants" id="AT1G55270.1">
    <property type="protein sequence ID" value="AT1G55270.1"/>
    <property type="gene ID" value="AT1G55270"/>
</dbReference>
<dbReference type="GeneID" id="841972"/>
<dbReference type="Gramene" id="AT1G55270.1">
    <property type="protein sequence ID" value="AT1G55270.1"/>
    <property type="gene ID" value="AT1G55270"/>
</dbReference>
<dbReference type="KEGG" id="ath:AT1G55270"/>
<dbReference type="Araport" id="AT1G55270"/>
<dbReference type="TAIR" id="AT1G55270">
    <property type="gene designation" value="SAGL1"/>
</dbReference>
<dbReference type="eggNOG" id="KOG1072">
    <property type="taxonomic scope" value="Eukaryota"/>
</dbReference>
<dbReference type="HOGENOM" id="CLU_046926_0_0_1"/>
<dbReference type="InParanoid" id="Q93W93"/>
<dbReference type="OMA" id="NSRVWEN"/>
<dbReference type="PhylomeDB" id="Q93W93"/>
<dbReference type="PRO" id="PR:Q93W93"/>
<dbReference type="Proteomes" id="UP000006548">
    <property type="component" value="Chromosome 1"/>
</dbReference>
<dbReference type="ExpressionAtlas" id="Q93W93">
    <property type="expression patterns" value="baseline and differential"/>
</dbReference>
<dbReference type="GO" id="GO:2000762">
    <property type="term" value="P:regulation of phenylpropanoid metabolic process"/>
    <property type="evidence" value="ECO:0000315"/>
    <property type="project" value="TAIR"/>
</dbReference>
<dbReference type="CDD" id="cd22152">
    <property type="entry name" value="F-box_AtAFR-like"/>
    <property type="match status" value="1"/>
</dbReference>
<dbReference type="FunFam" id="2.120.10.80:FF:000118">
    <property type="entry name" value="F-box/kelch-repeat protein At1g55270"/>
    <property type="match status" value="1"/>
</dbReference>
<dbReference type="Gene3D" id="2.120.10.80">
    <property type="entry name" value="Kelch-type beta propeller"/>
    <property type="match status" value="1"/>
</dbReference>
<dbReference type="InterPro" id="IPR036047">
    <property type="entry name" value="F-box-like_dom_sf"/>
</dbReference>
<dbReference type="InterPro" id="IPR001810">
    <property type="entry name" value="F-box_dom"/>
</dbReference>
<dbReference type="InterPro" id="IPR015915">
    <property type="entry name" value="Kelch-typ_b-propeller"/>
</dbReference>
<dbReference type="InterPro" id="IPR006652">
    <property type="entry name" value="Kelch_1"/>
</dbReference>
<dbReference type="PANTHER" id="PTHR46344:SF3">
    <property type="entry name" value="F-BOX DOMAIN-CONTAINING PROTEIN"/>
    <property type="match status" value="1"/>
</dbReference>
<dbReference type="PANTHER" id="PTHR46344">
    <property type="entry name" value="OS02G0202900 PROTEIN"/>
    <property type="match status" value="1"/>
</dbReference>
<dbReference type="Pfam" id="PF00646">
    <property type="entry name" value="F-box"/>
    <property type="match status" value="1"/>
</dbReference>
<dbReference type="Pfam" id="PF01344">
    <property type="entry name" value="Kelch_1"/>
    <property type="match status" value="2"/>
</dbReference>
<dbReference type="SMART" id="SM00612">
    <property type="entry name" value="Kelch"/>
    <property type="match status" value="2"/>
</dbReference>
<dbReference type="SUPFAM" id="SSF81383">
    <property type="entry name" value="F-box domain"/>
    <property type="match status" value="1"/>
</dbReference>
<dbReference type="SUPFAM" id="SSF117281">
    <property type="entry name" value="Kelch motif"/>
    <property type="match status" value="1"/>
</dbReference>